<keyword id="KW-0007">Acetylation</keyword>
<keyword id="KW-0010">Activator</keyword>
<keyword id="KW-0014">AIDS</keyword>
<keyword id="KW-0025">Alternative splicing</keyword>
<keyword id="KW-0053">Apoptosis</keyword>
<keyword id="KW-1035">Host cytoplasm</keyword>
<keyword id="KW-1048">Host nucleus</keyword>
<keyword id="KW-0945">Host-virus interaction</keyword>
<keyword id="KW-1090">Inhibition of host innate immune response by virus</keyword>
<keyword id="KW-1114">Inhibition of host interferon signaling pathway by virus</keyword>
<keyword id="KW-0922">Interferon antiviral system evasion</keyword>
<keyword id="KW-1017">Isopeptide bond</keyword>
<keyword id="KW-0479">Metal-binding</keyword>
<keyword id="KW-0488">Methylation</keyword>
<keyword id="KW-1122">Modulation of host chromatin by virus</keyword>
<keyword id="KW-1126">Modulation of host PP1 activity by virus</keyword>
<keyword id="KW-0597">Phosphoprotein</keyword>
<keyword id="KW-0694">RNA-binding</keyword>
<keyword id="KW-0964">Secreted</keyword>
<keyword id="KW-0804">Transcription</keyword>
<keyword id="KW-0805">Transcription regulation</keyword>
<keyword id="KW-0832">Ubl conjugation</keyword>
<keyword id="KW-0899">Viral immunoevasion</keyword>
<keyword id="KW-0862">Zinc</keyword>
<feature type="chain" id="PRO_0000244857" description="Protein Tat">
    <location>
        <begin position="1"/>
        <end position="101"/>
    </location>
</feature>
<feature type="region of interest" description="Transactivation" evidence="1">
    <location>
        <begin position="1"/>
        <end position="48"/>
    </location>
</feature>
<feature type="region of interest" description="Interaction with human CREBBP" evidence="1">
    <location>
        <begin position="1"/>
        <end position="24"/>
    </location>
</feature>
<feature type="region of interest" description="Cysteine-rich" evidence="1">
    <location>
        <begin position="22"/>
        <end position="37"/>
    </location>
</feature>
<feature type="region of interest" description="Core" evidence="1">
    <location>
        <begin position="38"/>
        <end position="48"/>
    </location>
</feature>
<feature type="region of interest" description="Disordered" evidence="2">
    <location>
        <begin position="48"/>
        <end position="101"/>
    </location>
</feature>
<feature type="region of interest" description="Interaction with the host capping enzyme RNGTT" evidence="1">
    <location>
        <begin position="49"/>
        <end position="86"/>
    </location>
</feature>
<feature type="short sequence motif" description="Nuclear localization signal, RNA-binding (TAR), and protein transduction" evidence="1">
    <location>
        <begin position="49"/>
        <end position="57"/>
    </location>
</feature>
<feature type="compositionally biased region" description="Basic and acidic residues" evidence="2">
    <location>
        <begin position="82"/>
        <end position="101"/>
    </location>
</feature>
<feature type="binding site" evidence="1">
    <location>
        <position position="22"/>
    </location>
    <ligand>
        <name>Zn(2+)</name>
        <dbReference type="ChEBI" id="CHEBI:29105"/>
        <label>1</label>
    </ligand>
</feature>
<feature type="binding site" evidence="1">
    <location>
        <position position="25"/>
    </location>
    <ligand>
        <name>Zn(2+)</name>
        <dbReference type="ChEBI" id="CHEBI:29105"/>
        <label>2</label>
    </ligand>
</feature>
<feature type="binding site" evidence="1">
    <location>
        <position position="27"/>
    </location>
    <ligand>
        <name>Zn(2+)</name>
        <dbReference type="ChEBI" id="CHEBI:29105"/>
        <label>2</label>
    </ligand>
</feature>
<feature type="binding site" evidence="1">
    <location>
        <position position="30"/>
    </location>
    <ligand>
        <name>Zn(2+)</name>
        <dbReference type="ChEBI" id="CHEBI:29105"/>
        <label>2</label>
    </ligand>
</feature>
<feature type="binding site" evidence="1">
    <location>
        <position position="33"/>
    </location>
    <ligand>
        <name>Zn(2+)</name>
        <dbReference type="ChEBI" id="CHEBI:29105"/>
        <label>1</label>
    </ligand>
</feature>
<feature type="binding site" evidence="1">
    <location>
        <position position="34"/>
    </location>
    <ligand>
        <name>Zn(2+)</name>
        <dbReference type="ChEBI" id="CHEBI:29105"/>
        <label>1</label>
    </ligand>
</feature>
<feature type="binding site" evidence="1">
    <location>
        <position position="37"/>
    </location>
    <ligand>
        <name>Zn(2+)</name>
        <dbReference type="ChEBI" id="CHEBI:29105"/>
        <label>1</label>
    </ligand>
</feature>
<feature type="site" description="Essential for Tat translocation through the endosomal membrane" evidence="1">
    <location>
        <position position="11"/>
    </location>
</feature>
<feature type="modified residue" description="N6-acetyllysine; by host PCAF" evidence="1">
    <location>
        <position position="28"/>
    </location>
</feature>
<feature type="modified residue" description="N6-acetyllysine; by host EP300 and GCN5L2" evidence="1">
    <location>
        <position position="50"/>
    </location>
</feature>
<feature type="modified residue" description="N6-acetyllysine; by host EP300 and GCN5L2" evidence="1">
    <location>
        <position position="51"/>
    </location>
</feature>
<feature type="modified residue" description="Asymmetric dimethylarginine; by host PRMT6" evidence="1">
    <location>
        <position position="52"/>
    </location>
</feature>
<feature type="modified residue" description="Asymmetric dimethylarginine; by host PRMT6" evidence="1">
    <location>
        <position position="53"/>
    </location>
</feature>
<feature type="cross-link" description="Glycyl lysine isopeptide (Lys-Gly) (interchain with G-Cter in ubiquitin)" evidence="1">
    <location>
        <position position="71"/>
    </location>
</feature>
<feature type="splice variant" id="VSP_022426" description="In isoform Short.">
    <location>
        <begin position="73"/>
        <end position="101"/>
    </location>
</feature>
<gene>
    <name evidence="1" type="primary">tat</name>
</gene>
<sequence>MEPVDPNREPWNHPGSQPKTACTNCYCKKCCYHCQVCFLQKGLGISYGRKKRRQRRSAPPGSKTHQDLIPKQPLSQTQRKPTGPEESKKEVESKAEPDRFD</sequence>
<accession>Q9WC57</accession>
<evidence type="ECO:0000255" key="1">
    <source>
        <dbReference type="HAMAP-Rule" id="MF_04079"/>
    </source>
</evidence>
<evidence type="ECO:0000256" key="2">
    <source>
        <dbReference type="SAM" id="MobiDB-lite"/>
    </source>
</evidence>
<evidence type="ECO:0000305" key="3"/>
<name>TAT_HV1S2</name>
<organismHost>
    <name type="scientific">Homo sapiens</name>
    <name type="common">Human</name>
    <dbReference type="NCBI Taxonomy" id="9606"/>
</organismHost>
<proteinExistence type="inferred from homology"/>
<dbReference type="EMBL" id="AF082394">
    <property type="protein sequence ID" value="AAD17763.1"/>
    <property type="molecule type" value="Genomic_DNA"/>
</dbReference>
<dbReference type="SMR" id="Q9WC57"/>
<dbReference type="Proteomes" id="UP000135310">
    <property type="component" value="Segment"/>
</dbReference>
<dbReference type="GO" id="GO:0005576">
    <property type="term" value="C:extracellular region"/>
    <property type="evidence" value="ECO:0007669"/>
    <property type="project" value="UniProtKB-SubCell"/>
</dbReference>
<dbReference type="GO" id="GO:0030430">
    <property type="term" value="C:host cell cytoplasm"/>
    <property type="evidence" value="ECO:0007669"/>
    <property type="project" value="UniProtKB-SubCell"/>
</dbReference>
<dbReference type="GO" id="GO:0044196">
    <property type="term" value="C:host cell nucleolus"/>
    <property type="evidence" value="ECO:0007669"/>
    <property type="project" value="UniProtKB-SubCell"/>
</dbReference>
<dbReference type="GO" id="GO:0042805">
    <property type="term" value="F:actinin binding"/>
    <property type="evidence" value="ECO:0007669"/>
    <property type="project" value="UniProtKB-UniRule"/>
</dbReference>
<dbReference type="GO" id="GO:0030332">
    <property type="term" value="F:cyclin binding"/>
    <property type="evidence" value="ECO:0007669"/>
    <property type="project" value="UniProtKB-UniRule"/>
</dbReference>
<dbReference type="GO" id="GO:0046872">
    <property type="term" value="F:metal ion binding"/>
    <property type="evidence" value="ECO:0007669"/>
    <property type="project" value="UniProtKB-UniRule"/>
</dbReference>
<dbReference type="GO" id="GO:0019904">
    <property type="term" value="F:protein domain specific binding"/>
    <property type="evidence" value="ECO:0007669"/>
    <property type="project" value="UniProtKB-UniRule"/>
</dbReference>
<dbReference type="GO" id="GO:0004865">
    <property type="term" value="F:protein serine/threonine phosphatase inhibitor activity"/>
    <property type="evidence" value="ECO:0007669"/>
    <property type="project" value="UniProtKB-KW"/>
</dbReference>
<dbReference type="GO" id="GO:0001070">
    <property type="term" value="F:RNA-binding transcription regulator activity"/>
    <property type="evidence" value="ECO:0007669"/>
    <property type="project" value="UniProtKB-UniRule"/>
</dbReference>
<dbReference type="GO" id="GO:1990970">
    <property type="term" value="F:trans-activation response element binding"/>
    <property type="evidence" value="ECO:0007669"/>
    <property type="project" value="UniProtKB-UniRule"/>
</dbReference>
<dbReference type="GO" id="GO:0006351">
    <property type="term" value="P:DNA-templated transcription"/>
    <property type="evidence" value="ECO:0007669"/>
    <property type="project" value="UniProtKB-UniRule"/>
</dbReference>
<dbReference type="GO" id="GO:0032968">
    <property type="term" value="P:positive regulation of transcription elongation by RNA polymerase II"/>
    <property type="evidence" value="ECO:0007669"/>
    <property type="project" value="UniProtKB-UniRule"/>
</dbReference>
<dbReference type="GO" id="GO:0050434">
    <property type="term" value="P:positive regulation of viral transcription"/>
    <property type="evidence" value="ECO:0007669"/>
    <property type="project" value="UniProtKB-UniRule"/>
</dbReference>
<dbReference type="GO" id="GO:0039525">
    <property type="term" value="P:symbiont-mediated perturbation of host chromatin organization"/>
    <property type="evidence" value="ECO:0007669"/>
    <property type="project" value="UniProtKB-UniRule"/>
</dbReference>
<dbReference type="GO" id="GO:0052170">
    <property type="term" value="P:symbiont-mediated suppression of host innate immune response"/>
    <property type="evidence" value="ECO:0007669"/>
    <property type="project" value="UniProtKB-KW"/>
</dbReference>
<dbReference type="GO" id="GO:0039606">
    <property type="term" value="P:symbiont-mediated suppression of host translation initiation"/>
    <property type="evidence" value="ECO:0007669"/>
    <property type="project" value="UniProtKB-KW"/>
</dbReference>
<dbReference type="GO" id="GO:0039502">
    <property type="term" value="P:symbiont-mediated suppression of host type I interferon-mediated signaling pathway"/>
    <property type="evidence" value="ECO:0007669"/>
    <property type="project" value="UniProtKB-UniRule"/>
</dbReference>
<dbReference type="Gene3D" id="4.10.20.10">
    <property type="entry name" value="Tat domain"/>
    <property type="match status" value="1"/>
</dbReference>
<dbReference type="HAMAP" id="MF_04079">
    <property type="entry name" value="HIV_TAT"/>
    <property type="match status" value="1"/>
</dbReference>
<dbReference type="InterPro" id="IPR001831">
    <property type="entry name" value="IV_Tat"/>
</dbReference>
<dbReference type="InterPro" id="IPR036963">
    <property type="entry name" value="Tat_dom_sf"/>
</dbReference>
<dbReference type="Pfam" id="PF00539">
    <property type="entry name" value="Tat"/>
    <property type="match status" value="1"/>
</dbReference>
<dbReference type="PRINTS" id="PR00055">
    <property type="entry name" value="HIVTATDOMAIN"/>
</dbReference>
<organism>
    <name type="scientific">Human immunodeficiency virus type 1 group M subtype J (isolate SE9280)</name>
    <name type="common">HIV-1</name>
    <dbReference type="NCBI Taxonomy" id="388905"/>
    <lineage>
        <taxon>Viruses</taxon>
        <taxon>Riboviria</taxon>
        <taxon>Pararnavirae</taxon>
        <taxon>Artverviricota</taxon>
        <taxon>Revtraviricetes</taxon>
        <taxon>Ortervirales</taxon>
        <taxon>Retroviridae</taxon>
        <taxon>Orthoretrovirinae</taxon>
        <taxon>Lentivirus</taxon>
        <taxon>Human immunodeficiency virus type 1</taxon>
    </lineage>
</organism>
<reference key="1">
    <citation type="journal article" date="1999" name="AIDS Res. Hum. Retroviruses">
        <title>Virtually full-length sequences of HIV type 1 subtype J reference strains.</title>
        <authorList>
            <person name="Laukkanen T."/>
            <person name="Albert J."/>
            <person name="Liitsola K."/>
            <person name="Green S.D."/>
            <person name="Carr J.K."/>
            <person name="Leitner T."/>
            <person name="McCutchan F.E."/>
            <person name="Salminen M.O."/>
        </authorList>
    </citation>
    <scope>NUCLEOTIDE SEQUENCE [GENOMIC DNA]</scope>
</reference>
<reference key="2">
    <citation type="journal article" date="2005" name="Microbes Infect.">
        <title>Decoding Tat: the biology of HIV Tat posttranslational modifications.</title>
        <authorList>
            <person name="Hetzer C."/>
            <person name="Dormeyer W."/>
            <person name="Schnolzer M."/>
            <person name="Ott M."/>
        </authorList>
    </citation>
    <scope>REVIEW</scope>
    <scope>ALTERNATIVE SPLICING</scope>
</reference>
<reference key="3">
    <citation type="journal article" date="2006" name="Front. Biosci.">
        <title>The multiple functions of HIV-1 Tat: proliferation versus apoptosis.</title>
        <authorList>
            <person name="Peruzzi F."/>
        </authorList>
    </citation>
    <scope>REVIEW</scope>
</reference>
<reference key="4">
    <citation type="journal article" date="2006" name="Microbes Infect.">
        <title>HIV tat and neurotoxicity.</title>
        <authorList>
            <person name="King J.E."/>
            <person name="Eugenin E.A."/>
            <person name="Buckner C.M."/>
            <person name="Berman J.W."/>
        </authorList>
    </citation>
    <scope>REVIEW</scope>
</reference>
<comment type="function">
    <text evidence="1">Transcriptional activator that increases RNA Pol II processivity, thereby increasing the level of full-length viral transcripts. Recognizes a hairpin structure at the 5'-LTR of the nascent viral mRNAs referred to as the transactivation responsive RNA element (TAR) and recruits the cyclin T1-CDK9 complex (P-TEFb complex) that will in turn hyperphosphorylate the RNA polymerase II to allow efficient elongation. The CDK9 component of P-TEFb and other Tat-activated kinases hyperphosphorylate the C-terminus of RNA Pol II that becomes stabilized and much more processive. Other factors such as HTATSF1/Tat-SF1, SUPT5H/SPT5, and HTATIP2 are also important for Tat's function. Besides its effect on RNA Pol II processivity, Tat induces chromatin remodeling of proviral genes by recruiting the histone acetyltransferases (HATs) CREBBP, EP300 and PCAF to the chromatin. This also contributes to the increase in proviral transcription rate, especially when the provirus integrates in transcriptionally silent region of the host genome. To ensure maximal activation of the LTR, Tat mediates nuclear translocation of NF-kappa-B by interacting with host RELA. Through its interaction with host TBP, Tat may also modulate transcription initiation. Tat can reactivate a latently infected cell by penetrating in it and transactivating its LTR promoter. In the cytoplasm, Tat is thought to act as a translational activator of HIV-1 mRNAs.</text>
</comment>
<comment type="function">
    <text evidence="1">Extracellular circulating Tat can be endocytosed by surrounding uninfected cells via the binding to several surface receptors such as CD26, CXCR4, heparan sulfate proteoglycans (HSPG) or LDLR. Neurons are rarely infected, but they internalize Tat via their LDLR. Through its interaction with nuclear HATs, Tat is potentially able to control the acetylation-dependent cellular gene expression. Modulates the expression of many cellular genes involved in cell survival, proliferation or in coding for cytokines or cytokine receptors. Tat plays a role in T-cell and neurons apoptosis. Tat induced neurotoxicity and apoptosis probably contribute to neuroAIDS. Circulating Tat also acts as a chemokine-like and/or growth factor-like molecule that binds to specific receptors on the surface of the cells, affecting many cellular pathways. In the vascular system, Tat binds to ITGAV/ITGB3 and ITGA5/ITGB1 integrins dimers at the surface of endothelial cells and competes with bFGF for heparin-binding sites, leading to an excess of soluble bFGF.</text>
</comment>
<comment type="subunit">
    <text evidence="1">Interacts with host CCNT1. Associates with the P-TEFb complex composed at least of Tat, P-TEFb (CDK9 and CCNT1), TAR RNA, RNA Pol II. Recruits the HATs CREBBP, TAF1/TFIID, EP300, PCAF and GCN5L2. Interacts with host KAT5/Tip60; this interaction targets the latter to degradation. Interacts with the host deacetylase SIRT1. Interacts with host capping enzyme RNGTT; this interaction stimulates RNGTT. Binds to host KDR, and to the host integrins ITGAV/ITGB3 and ITGA5/ITGB1. Interacts with host KPNB1/importin beta-1 without previous binding to KPNA1/importin alpha-1. Interacts with EIF2AK2. Interacts with host nucleosome assembly protein NAP1L1; this interaction may be required for the transport of Tat within the nucleus, since the two proteins interact at the nuclear rim. Interacts with host C1QBP/SF2P32; this interaction involves lysine-acetylated Tat. Interacts with the host chemokine receptors CCR2, CCR3 and CXCR4. Interacts with host DPP4/CD26; this interaction may trigger an anti-proliferative effect. Interacts with host LDLR. Interacts with the host extracellular matrix metalloproteinase MMP1. Interacts with host PRMT6; this interaction mediates Tat's methylation. Interacts with, and is ubiquitinated by MDM2/Hdm2. Interacts with host PSMC3 and HTATIP2. Interacts with STAB1; this interaction may overcome SATB1-mediated repression of IL2 and IL2RA (interleukin) in T cells by binding to the same domain than HDAC1. Interacts (when acetylated) with human CDK13, thereby increasing HIV-1 mRNA splicing and promoting the production of the doubly spliced HIV-1 protein Nef. Interacts with host TBP; this interaction modulates the activity of transcriptional pre-initiation complex. Interacts with host RELA. Interacts with host PLSCR1; this interaction negatively regulates Tat transactivation activity by altering its subcellular distribution.</text>
</comment>
<comment type="subcellular location">
    <subcellularLocation>
        <location evidence="1">Host nucleus</location>
        <location evidence="1">Host nucleolus</location>
    </subcellularLocation>
    <subcellularLocation>
        <location evidence="1">Host cytoplasm</location>
    </subcellularLocation>
    <subcellularLocation>
        <location evidence="1">Secreted</location>
    </subcellularLocation>
    <text evidence="1">Probably localizes to both nuclear and nucleolar compartments. Nuclear localization is mediated through the interaction of the nuclear localization signal with importin KPNB1. Secretion occurs through a Golgi-independent pathway. Tat is released from infected cells to the extracellular space where it remains associated to the cell membrane, or is secreted into the cerebrospinal fluid and sera. Extracellular Tat can be endocytosed by surrounding uninfected cells via binding to several receptors depending on the cell type.</text>
</comment>
<comment type="alternative products">
    <event type="alternative splicing"/>
    <isoform>
        <id>Q9WC57-1</id>
        <name>Long</name>
        <sequence type="displayed"/>
    </isoform>
    <isoform>
        <id>Q9WC57-2</id>
        <name>Short</name>
        <sequence type="described" ref="VSP_022426"/>
    </isoform>
</comment>
<comment type="domain">
    <text evidence="1">The cell attachment site mediates the interaction with ITGAV/ITGB3 and ITGA5/ITGB1 integrins, leading to vascular cell migration and invasion. This interaction also provides endothelial cells with the adhesion signal they require to grow in response to mitogens.</text>
</comment>
<comment type="domain">
    <text evidence="1">The Cys-rich region may bind 2 zinc ions. This region is involved in binding to KAT5.</text>
</comment>
<comment type="domain">
    <text evidence="1">The transactivation domain mediates the interaction with CCNT1, GCN5L2, and MDM2.</text>
</comment>
<comment type="domain">
    <text evidence="1">The Arg-rich RNA-binding region binds the TAR RNA. This region also mediates the nuclear localization through direct binding to KPNB1 and is involved in Tat's transfer across cell membranes (protein transduction). The same region is required for the interaction with EP300, PCAF, EIF2AK2 and KDR.</text>
</comment>
<comment type="PTM">
    <text evidence="1">Asymmetrical arginine methylation by host PRMT6 seems to diminish the transactivation capacity of Tat and affects the interaction with host CCNT1.</text>
</comment>
<comment type="PTM">
    <text evidence="1">Acetylation by EP300, CREBBP, GCN5L2/GCN5 and PCAF regulates the transactivation activity of Tat. EP300-mediated acetylation of Lys-50 promotes dissociation of Tat from the TAR RNA through the competitive binding to PCAF's bromodomain. In addition, the non-acetylated Tat's N-terminus can also interact with PCAF. PCAF-mediated acetylation of Lys-28 enhances Tat's binding to CCNT1. Lys-50 is deacetylated by SIRT1.</text>
</comment>
<comment type="PTM">
    <text evidence="1">Polyubiquitination by host MDM2 does not target Tat to degradation, but activates its transactivation function and fosters interaction with CCNT1 and TAR RNA.</text>
</comment>
<comment type="PTM">
    <text evidence="1">Phosphorylated by EIF2AK2 on serine and threonine residues adjacent to the basic region important for TAR RNA binding and function. Phosphorylation of Tat by EIF2AK2 is dependent on the prior activation of EIF2AK2 by dsRNA.</text>
</comment>
<comment type="miscellaneous">
    <text evidence="1">HIV-1 lineages are divided in three main groups, M (for Major), O (for Outlier), and N (for New, or Non-M, Non-O). The vast majority of strains found worldwide belong to the group M. Group O seems to be endemic to and largely confined to Cameroon and neighboring countries in West Central Africa, where these viruses represent a small minority of HIV-1 strains. The group N is represented by a limited number of isolates from Cameroonian persons. The group M is further subdivided in 9 clades or subtypes (A to D, F to H, J and K).</text>
</comment>
<comment type="miscellaneous">
    <molecule>Isoform Short</molecule>
    <text evidence="3">Expressed in the late stage of the infection cycle, when unspliced viral RNAs are exported to the cytoplasm by the viral Rev protein.</text>
</comment>
<comment type="similarity">
    <text evidence="1">Belongs to the lentiviruses Tat family.</text>
</comment>
<protein>
    <recommendedName>
        <fullName evidence="1">Protein Tat</fullName>
    </recommendedName>
    <alternativeName>
        <fullName evidence="1">Transactivating regulatory protein</fullName>
    </alternativeName>
</protein>